<sequence length="263" mass="29904">MPEGPEIRRAADNLEAAIKGKPLTDVWFAFPQLKTYQSQLIGQHVTHVETRGKALLTHFSNDLTLYSHNQLYGVWRVVDTGEEPQTTRVLRVKLQTADKTILLYSASDIEMLRPEQLTTHPFLQRVGPDVLDPNLTPEVVKERLLSPRFRNRQFAGLLLDQAFLAGLGNYLRVEILWQVGLTGNHKAKDLNAAQLDALAHALLEIPRFSYATRGQVDENKHHGALFRFKVFHRDGEPCERCGSIIEKTTLSSRPFYWCPGCQH</sequence>
<proteinExistence type="inferred from homology"/>
<dbReference type="EC" id="3.2.2.-" evidence="1"/>
<dbReference type="EC" id="4.2.99.18" evidence="1"/>
<dbReference type="EMBL" id="CP000946">
    <property type="protein sequence ID" value="ACA78568.1"/>
    <property type="molecule type" value="Genomic_DNA"/>
</dbReference>
<dbReference type="RefSeq" id="WP_001114026.1">
    <property type="nucleotide sequence ID" value="NZ_MTFT01000029.1"/>
</dbReference>
<dbReference type="SMR" id="B1IY15"/>
<dbReference type="KEGG" id="ecl:EcolC_2941"/>
<dbReference type="HOGENOM" id="CLU_038423_2_2_6"/>
<dbReference type="GO" id="GO:0140078">
    <property type="term" value="F:class I DNA-(apurinic or apyrimidinic site) endonuclease activity"/>
    <property type="evidence" value="ECO:0007669"/>
    <property type="project" value="UniProtKB-EC"/>
</dbReference>
<dbReference type="GO" id="GO:0003684">
    <property type="term" value="F:damaged DNA binding"/>
    <property type="evidence" value="ECO:0007669"/>
    <property type="project" value="InterPro"/>
</dbReference>
<dbReference type="GO" id="GO:0000703">
    <property type="term" value="F:oxidized pyrimidine nucleobase lesion DNA N-glycosylase activity"/>
    <property type="evidence" value="ECO:0007669"/>
    <property type="project" value="UniProtKB-UniRule"/>
</dbReference>
<dbReference type="GO" id="GO:0008270">
    <property type="term" value="F:zinc ion binding"/>
    <property type="evidence" value="ECO:0007669"/>
    <property type="project" value="UniProtKB-UniRule"/>
</dbReference>
<dbReference type="GO" id="GO:0006284">
    <property type="term" value="P:base-excision repair"/>
    <property type="evidence" value="ECO:0007669"/>
    <property type="project" value="InterPro"/>
</dbReference>
<dbReference type="CDD" id="cd08965">
    <property type="entry name" value="EcNei-like_N"/>
    <property type="match status" value="1"/>
</dbReference>
<dbReference type="FunFam" id="1.10.8.50:FF:000005">
    <property type="entry name" value="Endonuclease 8"/>
    <property type="match status" value="1"/>
</dbReference>
<dbReference type="FunFam" id="3.20.190.10:FF:000002">
    <property type="entry name" value="Endonuclease 8"/>
    <property type="match status" value="1"/>
</dbReference>
<dbReference type="Gene3D" id="1.10.8.50">
    <property type="match status" value="1"/>
</dbReference>
<dbReference type="Gene3D" id="3.20.190.10">
    <property type="entry name" value="MutM-like, N-terminal"/>
    <property type="match status" value="1"/>
</dbReference>
<dbReference type="HAMAP" id="MF_01253">
    <property type="entry name" value="Endonuclease_8"/>
    <property type="match status" value="1"/>
</dbReference>
<dbReference type="InterPro" id="IPR015886">
    <property type="entry name" value="DNA_glyclase/AP_lyase_DNA-bd"/>
</dbReference>
<dbReference type="InterPro" id="IPR015887">
    <property type="entry name" value="DNA_glyclase_Znf_dom_DNA_BS"/>
</dbReference>
<dbReference type="InterPro" id="IPR044091">
    <property type="entry name" value="EcNei-like_N"/>
</dbReference>
<dbReference type="InterPro" id="IPR023713">
    <property type="entry name" value="Endonuclease-VIII"/>
</dbReference>
<dbReference type="InterPro" id="IPR012319">
    <property type="entry name" value="FPG_cat"/>
</dbReference>
<dbReference type="InterPro" id="IPR035937">
    <property type="entry name" value="MutM-like_N-ter"/>
</dbReference>
<dbReference type="InterPro" id="IPR010979">
    <property type="entry name" value="Ribosomal_uS13-like_H2TH"/>
</dbReference>
<dbReference type="InterPro" id="IPR000214">
    <property type="entry name" value="Znf_DNA_glyclase/AP_lyase"/>
</dbReference>
<dbReference type="InterPro" id="IPR010663">
    <property type="entry name" value="Znf_FPG/IleRS"/>
</dbReference>
<dbReference type="NCBIfam" id="NF007763">
    <property type="entry name" value="PRK10445.1"/>
    <property type="match status" value="1"/>
</dbReference>
<dbReference type="PANTHER" id="PTHR42697">
    <property type="entry name" value="ENDONUCLEASE 8"/>
    <property type="match status" value="1"/>
</dbReference>
<dbReference type="PANTHER" id="PTHR42697:SF1">
    <property type="entry name" value="ENDONUCLEASE 8"/>
    <property type="match status" value="1"/>
</dbReference>
<dbReference type="Pfam" id="PF01149">
    <property type="entry name" value="Fapy_DNA_glyco"/>
    <property type="match status" value="1"/>
</dbReference>
<dbReference type="Pfam" id="PF06831">
    <property type="entry name" value="H2TH"/>
    <property type="match status" value="1"/>
</dbReference>
<dbReference type="Pfam" id="PF06827">
    <property type="entry name" value="zf-FPG_IleRS"/>
    <property type="match status" value="1"/>
</dbReference>
<dbReference type="SMART" id="SM00898">
    <property type="entry name" value="Fapy_DNA_glyco"/>
    <property type="match status" value="1"/>
</dbReference>
<dbReference type="SMART" id="SM01232">
    <property type="entry name" value="H2TH"/>
    <property type="match status" value="1"/>
</dbReference>
<dbReference type="SUPFAM" id="SSF57716">
    <property type="entry name" value="Glucocorticoid receptor-like (DNA-binding domain)"/>
    <property type="match status" value="1"/>
</dbReference>
<dbReference type="SUPFAM" id="SSF81624">
    <property type="entry name" value="N-terminal domain of MutM-like DNA repair proteins"/>
    <property type="match status" value="1"/>
</dbReference>
<dbReference type="SUPFAM" id="SSF46946">
    <property type="entry name" value="S13-like H2TH domain"/>
    <property type="match status" value="1"/>
</dbReference>
<dbReference type="PROSITE" id="PS51068">
    <property type="entry name" value="FPG_CAT"/>
    <property type="match status" value="1"/>
</dbReference>
<dbReference type="PROSITE" id="PS01242">
    <property type="entry name" value="ZF_FPG_1"/>
    <property type="match status" value="1"/>
</dbReference>
<dbReference type="PROSITE" id="PS51066">
    <property type="entry name" value="ZF_FPG_2"/>
    <property type="match status" value="1"/>
</dbReference>
<gene>
    <name evidence="1" type="primary">nei</name>
    <name type="ordered locus">EcolC_2941</name>
</gene>
<feature type="initiator methionine" description="Removed" evidence="1">
    <location>
        <position position="1"/>
    </location>
</feature>
<feature type="chain" id="PRO_1000085800" description="Endonuclease 8">
    <location>
        <begin position="2"/>
        <end position="263"/>
    </location>
</feature>
<feature type="zinc finger region" description="FPG-type" evidence="1">
    <location>
        <begin position="229"/>
        <end position="263"/>
    </location>
</feature>
<feature type="active site" description="Schiff-base intermediate with DNA" evidence="1">
    <location>
        <position position="2"/>
    </location>
</feature>
<feature type="active site" description="Proton donor" evidence="1">
    <location>
        <position position="3"/>
    </location>
</feature>
<feature type="active site" description="Proton donor; for beta-elimination activity" evidence="1">
    <location>
        <position position="53"/>
    </location>
</feature>
<feature type="active site" description="Proton donor; for delta-elimination activity" evidence="1">
    <location>
        <position position="253"/>
    </location>
</feature>
<feature type="binding site" evidence="1">
    <location>
        <position position="70"/>
    </location>
    <ligand>
        <name>DNA</name>
        <dbReference type="ChEBI" id="CHEBI:16991"/>
    </ligand>
</feature>
<feature type="binding site" evidence="1">
    <location>
        <position position="125"/>
    </location>
    <ligand>
        <name>DNA</name>
        <dbReference type="ChEBI" id="CHEBI:16991"/>
    </ligand>
</feature>
<feature type="binding site" evidence="1">
    <location>
        <position position="169"/>
    </location>
    <ligand>
        <name>DNA</name>
        <dbReference type="ChEBI" id="CHEBI:16991"/>
    </ligand>
</feature>
<evidence type="ECO:0000255" key="1">
    <source>
        <dbReference type="HAMAP-Rule" id="MF_01253"/>
    </source>
</evidence>
<reference key="1">
    <citation type="submission" date="2008-02" db="EMBL/GenBank/DDBJ databases">
        <title>Complete sequence of Escherichia coli C str. ATCC 8739.</title>
        <authorList>
            <person name="Copeland A."/>
            <person name="Lucas S."/>
            <person name="Lapidus A."/>
            <person name="Glavina del Rio T."/>
            <person name="Dalin E."/>
            <person name="Tice H."/>
            <person name="Bruce D."/>
            <person name="Goodwin L."/>
            <person name="Pitluck S."/>
            <person name="Kiss H."/>
            <person name="Brettin T."/>
            <person name="Detter J.C."/>
            <person name="Han C."/>
            <person name="Kuske C.R."/>
            <person name="Schmutz J."/>
            <person name="Larimer F."/>
            <person name="Land M."/>
            <person name="Hauser L."/>
            <person name="Kyrpides N."/>
            <person name="Mikhailova N."/>
            <person name="Ingram L."/>
            <person name="Richardson P."/>
        </authorList>
    </citation>
    <scope>NUCLEOTIDE SEQUENCE [LARGE SCALE GENOMIC DNA]</scope>
    <source>
        <strain>ATCC 8739 / DSM 1576 / NBRC 3972 / NCIMB 8545 / WDCM 00012 / Crooks</strain>
    </source>
</reference>
<name>END8_ECOLC</name>
<keyword id="KW-0227">DNA damage</keyword>
<keyword id="KW-0234">DNA repair</keyword>
<keyword id="KW-0238">DNA-binding</keyword>
<keyword id="KW-0326">Glycosidase</keyword>
<keyword id="KW-0378">Hydrolase</keyword>
<keyword id="KW-0456">Lyase</keyword>
<keyword id="KW-0479">Metal-binding</keyword>
<keyword id="KW-0511">Multifunctional enzyme</keyword>
<keyword id="KW-0862">Zinc</keyword>
<keyword id="KW-0863">Zinc-finger</keyword>
<organism>
    <name type="scientific">Escherichia coli (strain ATCC 8739 / DSM 1576 / NBRC 3972 / NCIMB 8545 / WDCM 00012 / Crooks)</name>
    <dbReference type="NCBI Taxonomy" id="481805"/>
    <lineage>
        <taxon>Bacteria</taxon>
        <taxon>Pseudomonadati</taxon>
        <taxon>Pseudomonadota</taxon>
        <taxon>Gammaproteobacteria</taxon>
        <taxon>Enterobacterales</taxon>
        <taxon>Enterobacteriaceae</taxon>
        <taxon>Escherichia</taxon>
    </lineage>
</organism>
<comment type="function">
    <text evidence="1">Involved in base excision repair of DNA damaged by oxidation or by mutagenic agents. Acts as a DNA glycosylase that recognizes and removes damaged bases. Has a preference for oxidized pyrimidines, such as thymine glycol, 5,6-dihydrouracil and 5,6-dihydrothymine. Has AP (apurinic/apyrimidinic) lyase activity and introduces nicks in the DNA strand. Cleaves the DNA backbone by beta-delta elimination to generate a single-strand break at the site of the removed base with both 3'- and 5'-phosphates.</text>
</comment>
<comment type="catalytic activity">
    <reaction evidence="1">
        <text>2'-deoxyribonucleotide-(2'-deoxyribose 5'-phosphate)-2'-deoxyribonucleotide-DNA = a 3'-end 2'-deoxyribonucleotide-(2,3-dehydro-2,3-deoxyribose 5'-phosphate)-DNA + a 5'-end 5'-phospho-2'-deoxyribonucleoside-DNA + H(+)</text>
        <dbReference type="Rhea" id="RHEA:66592"/>
        <dbReference type="Rhea" id="RHEA-COMP:13180"/>
        <dbReference type="Rhea" id="RHEA-COMP:16897"/>
        <dbReference type="Rhea" id="RHEA-COMP:17067"/>
        <dbReference type="ChEBI" id="CHEBI:15378"/>
        <dbReference type="ChEBI" id="CHEBI:136412"/>
        <dbReference type="ChEBI" id="CHEBI:157695"/>
        <dbReference type="ChEBI" id="CHEBI:167181"/>
        <dbReference type="EC" id="4.2.99.18"/>
    </reaction>
</comment>
<comment type="cofactor">
    <cofactor evidence="1">
        <name>Zn(2+)</name>
        <dbReference type="ChEBI" id="CHEBI:29105"/>
    </cofactor>
    <text evidence="1">Binds 1 zinc ion per subunit.</text>
</comment>
<comment type="similarity">
    <text evidence="1">Belongs to the FPG family.</text>
</comment>
<protein>
    <recommendedName>
        <fullName evidence="1">Endonuclease 8</fullName>
    </recommendedName>
    <alternativeName>
        <fullName evidence="1">DNA glycosylase/AP lyase Nei</fullName>
        <ecNumber evidence="1">3.2.2.-</ecNumber>
        <ecNumber evidence="1">4.2.99.18</ecNumber>
    </alternativeName>
    <alternativeName>
        <fullName evidence="1">DNA-(apurinic or apyrimidinic site) lyase Nei</fullName>
    </alternativeName>
    <alternativeName>
        <fullName evidence="1">Endonuclease VIII</fullName>
    </alternativeName>
</protein>
<accession>B1IY15</accession>